<evidence type="ECO:0000255" key="1">
    <source>
        <dbReference type="HAMAP-Rule" id="MF_01691"/>
    </source>
</evidence>
<comment type="function">
    <text evidence="1">Catalyzes the transfer of an acetyl group from acetyl-CoA to tetrahydrodipicolinate.</text>
</comment>
<comment type="catalytic activity">
    <reaction evidence="1">
        <text>(S)-2,3,4,5-tetrahydrodipicolinate + acetyl-CoA + H2O = L-2-acetamido-6-oxoheptanedioate + CoA</text>
        <dbReference type="Rhea" id="RHEA:13085"/>
        <dbReference type="ChEBI" id="CHEBI:15377"/>
        <dbReference type="ChEBI" id="CHEBI:16845"/>
        <dbReference type="ChEBI" id="CHEBI:57287"/>
        <dbReference type="ChEBI" id="CHEBI:57288"/>
        <dbReference type="ChEBI" id="CHEBI:58117"/>
        <dbReference type="EC" id="2.3.1.89"/>
    </reaction>
</comment>
<comment type="pathway">
    <text evidence="1">Amino-acid biosynthesis; L-lysine biosynthesis via DAP pathway; LL-2,6-diaminopimelate from (S)-tetrahydrodipicolinate (acetylase route): step 1/3.</text>
</comment>
<comment type="similarity">
    <text evidence="1">Belongs to the transferase hexapeptide repeat family. DapH subfamily.</text>
</comment>
<protein>
    <recommendedName>
        <fullName evidence="1">2,3,4,5-tetrahydropyridine-2,6-dicarboxylate N-acetyltransferase</fullName>
        <ecNumber evidence="1">2.3.1.89</ecNumber>
    </recommendedName>
    <alternativeName>
        <fullName evidence="1">Tetrahydrodipicolinate N-acetyltransferase</fullName>
        <shortName evidence="1">THP acetyltransferase</shortName>
        <shortName evidence="1">Tetrahydropicolinate acetylase</shortName>
    </alternativeName>
</protein>
<accession>B2V5B7</accession>
<gene>
    <name evidence="1" type="primary">dapH</name>
    <name type="ordered locus">CLH_2265</name>
</gene>
<reference key="1">
    <citation type="submission" date="2008-05" db="EMBL/GenBank/DDBJ databases">
        <title>Complete genome sequence of Clostridium botulinum E3 str. Alaska E43.</title>
        <authorList>
            <person name="Brinkac L.M."/>
            <person name="Brown J.L."/>
            <person name="Bruce D."/>
            <person name="Detter C."/>
            <person name="Munk C."/>
            <person name="Smith L.A."/>
            <person name="Smith T.J."/>
            <person name="Sutton G."/>
            <person name="Brettin T.S."/>
        </authorList>
    </citation>
    <scope>NUCLEOTIDE SEQUENCE [LARGE SCALE GENOMIC DNA]</scope>
    <source>
        <strain>Alaska E43 / Type E3</strain>
    </source>
</reference>
<dbReference type="EC" id="2.3.1.89" evidence="1"/>
<dbReference type="EMBL" id="CP001078">
    <property type="protein sequence ID" value="ACD53028.1"/>
    <property type="molecule type" value="Genomic_DNA"/>
</dbReference>
<dbReference type="SMR" id="B2V5B7"/>
<dbReference type="KEGG" id="cbt:CLH_2265"/>
<dbReference type="HOGENOM" id="CLU_103751_0_0_9"/>
<dbReference type="UniPathway" id="UPA00034">
    <property type="reaction ID" value="UER00022"/>
</dbReference>
<dbReference type="GO" id="GO:0047200">
    <property type="term" value="F:tetrahydrodipicolinate N-acetyltransferase activity"/>
    <property type="evidence" value="ECO:0007669"/>
    <property type="project" value="UniProtKB-EC"/>
</dbReference>
<dbReference type="GO" id="GO:0019877">
    <property type="term" value="P:diaminopimelate biosynthetic process"/>
    <property type="evidence" value="ECO:0007669"/>
    <property type="project" value="UniProtKB-UniRule"/>
</dbReference>
<dbReference type="GO" id="GO:0009089">
    <property type="term" value="P:lysine biosynthetic process via diaminopimelate"/>
    <property type="evidence" value="ECO:0007669"/>
    <property type="project" value="UniProtKB-UniRule"/>
</dbReference>
<dbReference type="CDD" id="cd03350">
    <property type="entry name" value="LbH_THP_succinylT"/>
    <property type="match status" value="1"/>
</dbReference>
<dbReference type="Gene3D" id="2.160.10.10">
    <property type="entry name" value="Hexapeptide repeat proteins"/>
    <property type="match status" value="1"/>
</dbReference>
<dbReference type="Gene3D" id="3.30.70.250">
    <property type="entry name" value="Malonyl-CoA ACP transacylase, ACP-binding"/>
    <property type="match status" value="1"/>
</dbReference>
<dbReference type="HAMAP" id="MF_01691">
    <property type="entry name" value="DapH"/>
    <property type="match status" value="1"/>
</dbReference>
<dbReference type="InterPro" id="IPR019873">
    <property type="entry name" value="DapH"/>
</dbReference>
<dbReference type="InterPro" id="IPR013710">
    <property type="entry name" value="DapH_N"/>
</dbReference>
<dbReference type="InterPro" id="IPR001451">
    <property type="entry name" value="Hexapep"/>
</dbReference>
<dbReference type="InterPro" id="IPR018357">
    <property type="entry name" value="Hexapep_transf_CS"/>
</dbReference>
<dbReference type="InterPro" id="IPR050179">
    <property type="entry name" value="Trans_hexapeptide_repeat"/>
</dbReference>
<dbReference type="InterPro" id="IPR011004">
    <property type="entry name" value="Trimer_LpxA-like_sf"/>
</dbReference>
<dbReference type="NCBIfam" id="TIGR03532">
    <property type="entry name" value="DapD_Ac"/>
    <property type="match status" value="1"/>
</dbReference>
<dbReference type="PANTHER" id="PTHR43300:SF10">
    <property type="entry name" value="2,3,4,5-TETRAHYDROPYRIDINE-2,6-DICARBOXYLATE N-ACETYLTRANSFERASE"/>
    <property type="match status" value="1"/>
</dbReference>
<dbReference type="PANTHER" id="PTHR43300">
    <property type="entry name" value="ACETYLTRANSFERASE"/>
    <property type="match status" value="1"/>
</dbReference>
<dbReference type="Pfam" id="PF08503">
    <property type="entry name" value="DapH_N"/>
    <property type="match status" value="1"/>
</dbReference>
<dbReference type="Pfam" id="PF00132">
    <property type="entry name" value="Hexapep"/>
    <property type="match status" value="2"/>
</dbReference>
<dbReference type="SUPFAM" id="SSF51161">
    <property type="entry name" value="Trimeric LpxA-like enzymes"/>
    <property type="match status" value="1"/>
</dbReference>
<dbReference type="PROSITE" id="PS00101">
    <property type="entry name" value="HEXAPEP_TRANSFERASES"/>
    <property type="match status" value="1"/>
</dbReference>
<organism>
    <name type="scientific">Clostridium botulinum (strain Alaska E43 / Type E3)</name>
    <dbReference type="NCBI Taxonomy" id="508767"/>
    <lineage>
        <taxon>Bacteria</taxon>
        <taxon>Bacillati</taxon>
        <taxon>Bacillota</taxon>
        <taxon>Clostridia</taxon>
        <taxon>Eubacteriales</taxon>
        <taxon>Clostridiaceae</taxon>
        <taxon>Clostridium</taxon>
    </lineage>
</organism>
<name>DAPH_CLOBA</name>
<proteinExistence type="inferred from homology"/>
<keyword id="KW-0012">Acyltransferase</keyword>
<keyword id="KW-0028">Amino-acid biosynthesis</keyword>
<keyword id="KW-0220">Diaminopimelate biosynthesis</keyword>
<keyword id="KW-0457">Lysine biosynthesis</keyword>
<keyword id="KW-0677">Repeat</keyword>
<keyword id="KW-0808">Transferase</keyword>
<feature type="chain" id="PRO_0000376644" description="2,3,4,5-tetrahydropyridine-2,6-dicarboxylate N-acetyltransferase">
    <location>
        <begin position="1"/>
        <end position="236"/>
    </location>
</feature>
<sequence>MSYNLTDPYEIARFIKESKKSTPVKVYVNGDLSEALMDDIEWYGANGFYILIGESDLVAKIILDNKHLIKHFRLENDRRNSAIPMLDLLEVEARIEPGAIIRDKVTIGKNAVVMMGAVINIGAEIGDGTMVDMNAVIGARGKLGKNVHLGAGAVVAGVLEPPSKEPCTVGDNVLIGANSVILEGVKIGAGSVVAAGSVVAEDVPEGVVVAGSPAKIIKSVDDKTKGKTQLLDDLRK</sequence>